<sequence length="118" mass="13630">MKNRYIQQFEDTQLKDKTMPAFKAGDTLRLGITIKEGEKTRTQYFEGVCIAIRGNGVDKTFCVRKIGANNIGVEKIFPFYSESLASVEVLRVGRVRRAKLYYLRDRRGKAARIKEVRH</sequence>
<organism>
    <name type="scientific">Helicobacter pylori (strain G27)</name>
    <dbReference type="NCBI Taxonomy" id="563041"/>
    <lineage>
        <taxon>Bacteria</taxon>
        <taxon>Pseudomonadati</taxon>
        <taxon>Campylobacterota</taxon>
        <taxon>Epsilonproteobacteria</taxon>
        <taxon>Campylobacterales</taxon>
        <taxon>Helicobacteraceae</taxon>
        <taxon>Helicobacter</taxon>
    </lineage>
</organism>
<protein>
    <recommendedName>
        <fullName evidence="1">Large ribosomal subunit protein bL19</fullName>
    </recommendedName>
    <alternativeName>
        <fullName evidence="2">50S ribosomal protein L19</fullName>
    </alternativeName>
</protein>
<proteinExistence type="inferred from homology"/>
<comment type="function">
    <text evidence="1">This protein is located at the 30S-50S ribosomal subunit interface and may play a role in the structure and function of the aminoacyl-tRNA binding site.</text>
</comment>
<comment type="similarity">
    <text evidence="1">Belongs to the bacterial ribosomal protein bL19 family.</text>
</comment>
<reference key="1">
    <citation type="journal article" date="2009" name="J. Bacteriol.">
        <title>The complete genome sequence of Helicobacter pylori strain G27.</title>
        <authorList>
            <person name="Baltrus D.A."/>
            <person name="Amieva M.R."/>
            <person name="Covacci A."/>
            <person name="Lowe T.M."/>
            <person name="Merrell D.S."/>
            <person name="Ottemann K.M."/>
            <person name="Stein M."/>
            <person name="Salama N.R."/>
            <person name="Guillemin K."/>
        </authorList>
    </citation>
    <scope>NUCLEOTIDE SEQUENCE [LARGE SCALE GENOMIC DNA]</scope>
    <source>
        <strain>G27</strain>
    </source>
</reference>
<keyword id="KW-1185">Reference proteome</keyword>
<keyword id="KW-0687">Ribonucleoprotein</keyword>
<keyword id="KW-0689">Ribosomal protein</keyword>
<dbReference type="EMBL" id="CP001173">
    <property type="protein sequence ID" value="ACI27842.1"/>
    <property type="molecule type" value="Genomic_DNA"/>
</dbReference>
<dbReference type="RefSeq" id="WP_000797726.1">
    <property type="nucleotide sequence ID" value="NC_011333.1"/>
</dbReference>
<dbReference type="SMR" id="B5Z8E3"/>
<dbReference type="KEGG" id="hpg:HPG27_1091"/>
<dbReference type="HOGENOM" id="CLU_103507_2_1_7"/>
<dbReference type="Proteomes" id="UP000001735">
    <property type="component" value="Chromosome"/>
</dbReference>
<dbReference type="GO" id="GO:0022625">
    <property type="term" value="C:cytosolic large ribosomal subunit"/>
    <property type="evidence" value="ECO:0007669"/>
    <property type="project" value="TreeGrafter"/>
</dbReference>
<dbReference type="GO" id="GO:0003735">
    <property type="term" value="F:structural constituent of ribosome"/>
    <property type="evidence" value="ECO:0007669"/>
    <property type="project" value="InterPro"/>
</dbReference>
<dbReference type="GO" id="GO:0006412">
    <property type="term" value="P:translation"/>
    <property type="evidence" value="ECO:0007669"/>
    <property type="project" value="UniProtKB-UniRule"/>
</dbReference>
<dbReference type="FunFam" id="2.30.30.790:FF:000001">
    <property type="entry name" value="50S ribosomal protein L19"/>
    <property type="match status" value="1"/>
</dbReference>
<dbReference type="Gene3D" id="2.30.30.790">
    <property type="match status" value="1"/>
</dbReference>
<dbReference type="HAMAP" id="MF_00402">
    <property type="entry name" value="Ribosomal_bL19"/>
    <property type="match status" value="1"/>
</dbReference>
<dbReference type="InterPro" id="IPR001857">
    <property type="entry name" value="Ribosomal_bL19"/>
</dbReference>
<dbReference type="InterPro" id="IPR018257">
    <property type="entry name" value="Ribosomal_bL19_CS"/>
</dbReference>
<dbReference type="InterPro" id="IPR038657">
    <property type="entry name" value="Ribosomal_bL19_sf"/>
</dbReference>
<dbReference type="InterPro" id="IPR008991">
    <property type="entry name" value="Translation_prot_SH3-like_sf"/>
</dbReference>
<dbReference type="NCBIfam" id="TIGR01024">
    <property type="entry name" value="rplS_bact"/>
    <property type="match status" value="1"/>
</dbReference>
<dbReference type="PANTHER" id="PTHR15680:SF9">
    <property type="entry name" value="LARGE RIBOSOMAL SUBUNIT PROTEIN BL19M"/>
    <property type="match status" value="1"/>
</dbReference>
<dbReference type="PANTHER" id="PTHR15680">
    <property type="entry name" value="RIBOSOMAL PROTEIN L19"/>
    <property type="match status" value="1"/>
</dbReference>
<dbReference type="Pfam" id="PF01245">
    <property type="entry name" value="Ribosomal_L19"/>
    <property type="match status" value="1"/>
</dbReference>
<dbReference type="PIRSF" id="PIRSF002191">
    <property type="entry name" value="Ribosomal_L19"/>
    <property type="match status" value="1"/>
</dbReference>
<dbReference type="PRINTS" id="PR00061">
    <property type="entry name" value="RIBOSOMALL19"/>
</dbReference>
<dbReference type="SUPFAM" id="SSF50104">
    <property type="entry name" value="Translation proteins SH3-like domain"/>
    <property type="match status" value="1"/>
</dbReference>
<dbReference type="PROSITE" id="PS01015">
    <property type="entry name" value="RIBOSOMAL_L19"/>
    <property type="match status" value="1"/>
</dbReference>
<name>RL19_HELPG</name>
<gene>
    <name evidence="1" type="primary">rplS</name>
    <name type="ordered locus">HPG27_1091</name>
</gene>
<accession>B5Z8E3</accession>
<evidence type="ECO:0000255" key="1">
    <source>
        <dbReference type="HAMAP-Rule" id="MF_00402"/>
    </source>
</evidence>
<evidence type="ECO:0000305" key="2"/>
<feature type="chain" id="PRO_1000193847" description="Large ribosomal subunit protein bL19">
    <location>
        <begin position="1"/>
        <end position="118"/>
    </location>
</feature>